<protein>
    <recommendedName>
        <fullName evidence="1">Holliday junction branch migration complex subunit RuvB</fullName>
        <ecNumber evidence="1">3.6.4.-</ecNumber>
    </recommendedName>
</protein>
<gene>
    <name evidence="1" type="primary">ruvB</name>
    <name type="ordered locus">LBJ_0761</name>
</gene>
<evidence type="ECO:0000255" key="1">
    <source>
        <dbReference type="HAMAP-Rule" id="MF_00016"/>
    </source>
</evidence>
<feature type="chain" id="PRO_1000001422" description="Holliday junction branch migration complex subunit RuvB">
    <location>
        <begin position="1"/>
        <end position="341"/>
    </location>
</feature>
<feature type="region of interest" description="Large ATPase domain (RuvB-L)" evidence="1">
    <location>
        <begin position="1"/>
        <end position="180"/>
    </location>
</feature>
<feature type="region of interest" description="Small ATPAse domain (RuvB-S)" evidence="1">
    <location>
        <begin position="181"/>
        <end position="251"/>
    </location>
</feature>
<feature type="region of interest" description="Head domain (RuvB-H)" evidence="1">
    <location>
        <begin position="254"/>
        <end position="341"/>
    </location>
</feature>
<feature type="binding site" evidence="1">
    <location>
        <position position="19"/>
    </location>
    <ligand>
        <name>ATP</name>
        <dbReference type="ChEBI" id="CHEBI:30616"/>
    </ligand>
</feature>
<feature type="binding site" evidence="1">
    <location>
        <position position="20"/>
    </location>
    <ligand>
        <name>ATP</name>
        <dbReference type="ChEBI" id="CHEBI:30616"/>
    </ligand>
</feature>
<feature type="binding site" evidence="1">
    <location>
        <position position="61"/>
    </location>
    <ligand>
        <name>ATP</name>
        <dbReference type="ChEBI" id="CHEBI:30616"/>
    </ligand>
</feature>
<feature type="binding site" evidence="1">
    <location>
        <position position="64"/>
    </location>
    <ligand>
        <name>ATP</name>
        <dbReference type="ChEBI" id="CHEBI:30616"/>
    </ligand>
</feature>
<feature type="binding site" evidence="1">
    <location>
        <position position="65"/>
    </location>
    <ligand>
        <name>ATP</name>
        <dbReference type="ChEBI" id="CHEBI:30616"/>
    </ligand>
</feature>
<feature type="binding site" evidence="1">
    <location>
        <position position="65"/>
    </location>
    <ligand>
        <name>Mg(2+)</name>
        <dbReference type="ChEBI" id="CHEBI:18420"/>
    </ligand>
</feature>
<feature type="binding site" evidence="1">
    <location>
        <position position="66"/>
    </location>
    <ligand>
        <name>ATP</name>
        <dbReference type="ChEBI" id="CHEBI:30616"/>
    </ligand>
</feature>
<feature type="binding site" evidence="1">
    <location>
        <position position="170"/>
    </location>
    <ligand>
        <name>ATP</name>
        <dbReference type="ChEBI" id="CHEBI:30616"/>
    </ligand>
</feature>
<feature type="binding site" evidence="1">
    <location>
        <position position="180"/>
    </location>
    <ligand>
        <name>ATP</name>
        <dbReference type="ChEBI" id="CHEBI:30616"/>
    </ligand>
</feature>
<feature type="binding site" evidence="1">
    <location>
        <position position="217"/>
    </location>
    <ligand>
        <name>ATP</name>
        <dbReference type="ChEBI" id="CHEBI:30616"/>
    </ligand>
</feature>
<feature type="binding site" evidence="1">
    <location>
        <position position="309"/>
    </location>
    <ligand>
        <name>DNA</name>
        <dbReference type="ChEBI" id="CHEBI:16991"/>
    </ligand>
</feature>
<feature type="binding site" evidence="1">
    <location>
        <position position="314"/>
    </location>
    <ligand>
        <name>DNA</name>
        <dbReference type="ChEBI" id="CHEBI:16991"/>
    </ligand>
</feature>
<organism>
    <name type="scientific">Leptospira borgpetersenii serovar Hardjo-bovis (strain JB197)</name>
    <dbReference type="NCBI Taxonomy" id="355277"/>
    <lineage>
        <taxon>Bacteria</taxon>
        <taxon>Pseudomonadati</taxon>
        <taxon>Spirochaetota</taxon>
        <taxon>Spirochaetia</taxon>
        <taxon>Leptospirales</taxon>
        <taxon>Leptospiraceae</taxon>
        <taxon>Leptospira</taxon>
    </lineage>
</organism>
<accession>Q04UI9</accession>
<comment type="function">
    <text evidence="1">The RuvA-RuvB-RuvC complex processes Holliday junction (HJ) DNA during genetic recombination and DNA repair, while the RuvA-RuvB complex plays an important role in the rescue of blocked DNA replication forks via replication fork reversal (RFR). RuvA specifically binds to HJ cruciform DNA, conferring on it an open structure. The RuvB hexamer acts as an ATP-dependent pump, pulling dsDNA into and through the RuvAB complex. RuvB forms 2 homohexamers on either side of HJ DNA bound by 1 or 2 RuvA tetramers; 4 subunits per hexamer contact DNA at a time. Coordinated motions by a converter formed by DNA-disengaged RuvB subunits stimulates ATP hydrolysis and nucleotide exchange. Immobilization of the converter enables RuvB to convert the ATP-contained energy into a lever motion, pulling 2 nucleotides of DNA out of the RuvA tetramer per ATP hydrolyzed, thus driving DNA branch migration. The RuvB motors rotate together with the DNA substrate, which together with the progressing nucleotide cycle form the mechanistic basis for DNA recombination by continuous HJ branch migration. Branch migration allows RuvC to scan DNA until it finds its consensus sequence, where it cleaves and resolves cruciform DNA.</text>
</comment>
<comment type="catalytic activity">
    <reaction evidence="1">
        <text>ATP + H2O = ADP + phosphate + H(+)</text>
        <dbReference type="Rhea" id="RHEA:13065"/>
        <dbReference type="ChEBI" id="CHEBI:15377"/>
        <dbReference type="ChEBI" id="CHEBI:15378"/>
        <dbReference type="ChEBI" id="CHEBI:30616"/>
        <dbReference type="ChEBI" id="CHEBI:43474"/>
        <dbReference type="ChEBI" id="CHEBI:456216"/>
    </reaction>
</comment>
<comment type="subunit">
    <text evidence="1">Homohexamer. Forms an RuvA(8)-RuvB(12)-Holliday junction (HJ) complex. HJ DNA is sandwiched between 2 RuvA tetramers; dsDNA enters through RuvA and exits via RuvB. An RuvB hexamer assembles on each DNA strand where it exits the tetramer. Each RuvB hexamer is contacted by two RuvA subunits (via domain III) on 2 adjacent RuvB subunits; this complex drives branch migration. In the full resolvosome a probable DNA-RuvA(4)-RuvB(12)-RuvC(2) complex forms which resolves the HJ.</text>
</comment>
<comment type="subcellular location">
    <subcellularLocation>
        <location evidence="1">Cytoplasm</location>
    </subcellularLocation>
</comment>
<comment type="domain">
    <text evidence="1">Has 3 domains, the large (RuvB-L) and small ATPase (RuvB-S) domains and the C-terminal head (RuvB-H) domain. The head domain binds DNA, while the ATPase domains jointly bind ATP, ADP or are empty depending on the state of the subunit in the translocation cycle. During a single DNA translocation step the structure of each domain remains the same, but their relative positions change.</text>
</comment>
<comment type="similarity">
    <text evidence="1">Belongs to the RuvB family.</text>
</comment>
<name>RUVB_LEPBJ</name>
<sequence length="341" mass="37964">MAKSHTLNPEEEFEEESGLRPSLLSEFIGQKEVLNNLTVYVQAAKNRKRALDHVLISGPPGLGKTTLAGIVSNELGTRLTITSAPVITKGADLARLLTSVGENEILFIDEIHTLHKKLEEILYPAMENYMIDLVIGEGVTAQMVQIPLKPFTLVGATTRSGLISEPLKSRFGIQLRLDYYNDEEMKEIVLRSSRILGVKIEDDAALEIGKRSRKTPRIANHLLKRIRDFSEVEGNLSVKKGLCLKAFEKMGIDDLGLDGMDRQILGCMIDRYKGGPVGLKAIAVVVGEEEKTIEDTYESFMVRIGLINRTPAGRVATEKAYRQLKRMQDFSENHGQDPTLF</sequence>
<reference key="1">
    <citation type="journal article" date="2006" name="Proc. Natl. Acad. Sci. U.S.A.">
        <title>Genome reduction in Leptospira borgpetersenii reflects limited transmission potential.</title>
        <authorList>
            <person name="Bulach D.M."/>
            <person name="Zuerner R.L."/>
            <person name="Wilson P."/>
            <person name="Seemann T."/>
            <person name="McGrath A."/>
            <person name="Cullen P.A."/>
            <person name="Davis J."/>
            <person name="Johnson M."/>
            <person name="Kuczek E."/>
            <person name="Alt D.P."/>
            <person name="Peterson-Burch B."/>
            <person name="Coppel R.L."/>
            <person name="Rood J.I."/>
            <person name="Davies J.K."/>
            <person name="Adler B."/>
        </authorList>
    </citation>
    <scope>NUCLEOTIDE SEQUENCE [LARGE SCALE GENOMIC DNA]</scope>
    <source>
        <strain>JB197</strain>
    </source>
</reference>
<proteinExistence type="inferred from homology"/>
<keyword id="KW-0067">ATP-binding</keyword>
<keyword id="KW-0963">Cytoplasm</keyword>
<keyword id="KW-0227">DNA damage</keyword>
<keyword id="KW-0233">DNA recombination</keyword>
<keyword id="KW-0234">DNA repair</keyword>
<keyword id="KW-0238">DNA-binding</keyword>
<keyword id="KW-0378">Hydrolase</keyword>
<keyword id="KW-0547">Nucleotide-binding</keyword>
<dbReference type="EC" id="3.6.4.-" evidence="1"/>
<dbReference type="EMBL" id="CP000350">
    <property type="protein sequence ID" value="ABJ75431.1"/>
    <property type="molecule type" value="Genomic_DNA"/>
</dbReference>
<dbReference type="RefSeq" id="WP_011671615.1">
    <property type="nucleotide sequence ID" value="NC_008510.1"/>
</dbReference>
<dbReference type="SMR" id="Q04UI9"/>
<dbReference type="KEGG" id="lbj:LBJ_0761"/>
<dbReference type="HOGENOM" id="CLU_055599_1_0_12"/>
<dbReference type="Proteomes" id="UP000000656">
    <property type="component" value="Chromosome 1"/>
</dbReference>
<dbReference type="GO" id="GO:0005737">
    <property type="term" value="C:cytoplasm"/>
    <property type="evidence" value="ECO:0007669"/>
    <property type="project" value="UniProtKB-SubCell"/>
</dbReference>
<dbReference type="GO" id="GO:0048476">
    <property type="term" value="C:Holliday junction resolvase complex"/>
    <property type="evidence" value="ECO:0007669"/>
    <property type="project" value="UniProtKB-UniRule"/>
</dbReference>
<dbReference type="GO" id="GO:0005524">
    <property type="term" value="F:ATP binding"/>
    <property type="evidence" value="ECO:0007669"/>
    <property type="project" value="UniProtKB-UniRule"/>
</dbReference>
<dbReference type="GO" id="GO:0016887">
    <property type="term" value="F:ATP hydrolysis activity"/>
    <property type="evidence" value="ECO:0007669"/>
    <property type="project" value="InterPro"/>
</dbReference>
<dbReference type="GO" id="GO:0000400">
    <property type="term" value="F:four-way junction DNA binding"/>
    <property type="evidence" value="ECO:0007669"/>
    <property type="project" value="UniProtKB-UniRule"/>
</dbReference>
<dbReference type="GO" id="GO:0009378">
    <property type="term" value="F:four-way junction helicase activity"/>
    <property type="evidence" value="ECO:0007669"/>
    <property type="project" value="InterPro"/>
</dbReference>
<dbReference type="GO" id="GO:0006310">
    <property type="term" value="P:DNA recombination"/>
    <property type="evidence" value="ECO:0007669"/>
    <property type="project" value="UniProtKB-UniRule"/>
</dbReference>
<dbReference type="GO" id="GO:0006281">
    <property type="term" value="P:DNA repair"/>
    <property type="evidence" value="ECO:0007669"/>
    <property type="project" value="UniProtKB-UniRule"/>
</dbReference>
<dbReference type="CDD" id="cd00009">
    <property type="entry name" value="AAA"/>
    <property type="match status" value="1"/>
</dbReference>
<dbReference type="Gene3D" id="1.10.8.60">
    <property type="match status" value="1"/>
</dbReference>
<dbReference type="Gene3D" id="3.40.50.300">
    <property type="entry name" value="P-loop containing nucleotide triphosphate hydrolases"/>
    <property type="match status" value="1"/>
</dbReference>
<dbReference type="Gene3D" id="1.10.10.10">
    <property type="entry name" value="Winged helix-like DNA-binding domain superfamily/Winged helix DNA-binding domain"/>
    <property type="match status" value="1"/>
</dbReference>
<dbReference type="HAMAP" id="MF_00016">
    <property type="entry name" value="DNA_HJ_migration_RuvB"/>
    <property type="match status" value="1"/>
</dbReference>
<dbReference type="InterPro" id="IPR003593">
    <property type="entry name" value="AAA+_ATPase"/>
</dbReference>
<dbReference type="InterPro" id="IPR041445">
    <property type="entry name" value="AAA_lid_4"/>
</dbReference>
<dbReference type="InterPro" id="IPR004605">
    <property type="entry name" value="DNA_helicase_Holl-junc_RuvB"/>
</dbReference>
<dbReference type="InterPro" id="IPR027417">
    <property type="entry name" value="P-loop_NTPase"/>
</dbReference>
<dbReference type="InterPro" id="IPR008824">
    <property type="entry name" value="RuvB-like_N"/>
</dbReference>
<dbReference type="InterPro" id="IPR008823">
    <property type="entry name" value="RuvB_C"/>
</dbReference>
<dbReference type="InterPro" id="IPR036388">
    <property type="entry name" value="WH-like_DNA-bd_sf"/>
</dbReference>
<dbReference type="InterPro" id="IPR036390">
    <property type="entry name" value="WH_DNA-bd_sf"/>
</dbReference>
<dbReference type="NCBIfam" id="NF000868">
    <property type="entry name" value="PRK00080.1"/>
    <property type="match status" value="1"/>
</dbReference>
<dbReference type="NCBIfam" id="TIGR00635">
    <property type="entry name" value="ruvB"/>
    <property type="match status" value="1"/>
</dbReference>
<dbReference type="PANTHER" id="PTHR42848">
    <property type="match status" value="1"/>
</dbReference>
<dbReference type="PANTHER" id="PTHR42848:SF1">
    <property type="entry name" value="HOLLIDAY JUNCTION BRANCH MIGRATION COMPLEX SUBUNIT RUVB"/>
    <property type="match status" value="1"/>
</dbReference>
<dbReference type="Pfam" id="PF17864">
    <property type="entry name" value="AAA_lid_4"/>
    <property type="match status" value="1"/>
</dbReference>
<dbReference type="Pfam" id="PF05491">
    <property type="entry name" value="RuvB_C"/>
    <property type="match status" value="1"/>
</dbReference>
<dbReference type="Pfam" id="PF05496">
    <property type="entry name" value="RuvB_N"/>
    <property type="match status" value="1"/>
</dbReference>
<dbReference type="SMART" id="SM00382">
    <property type="entry name" value="AAA"/>
    <property type="match status" value="1"/>
</dbReference>
<dbReference type="SUPFAM" id="SSF52540">
    <property type="entry name" value="P-loop containing nucleoside triphosphate hydrolases"/>
    <property type="match status" value="1"/>
</dbReference>
<dbReference type="SUPFAM" id="SSF46785">
    <property type="entry name" value="Winged helix' DNA-binding domain"/>
    <property type="match status" value="1"/>
</dbReference>